<dbReference type="EC" id="3.6.5.3" evidence="2"/>
<dbReference type="EMBL" id="CP000812">
    <property type="protein sequence ID" value="ABV33143.1"/>
    <property type="molecule type" value="Genomic_DNA"/>
</dbReference>
<dbReference type="RefSeq" id="WP_012002624.1">
    <property type="nucleotide sequence ID" value="NZ_BSDV01000001.1"/>
</dbReference>
<dbReference type="SMR" id="A8F4Q9"/>
<dbReference type="STRING" id="416591.Tlet_0577"/>
<dbReference type="KEGG" id="tle:Tlet_0577"/>
<dbReference type="eggNOG" id="COG0050">
    <property type="taxonomic scope" value="Bacteria"/>
</dbReference>
<dbReference type="HOGENOM" id="CLU_007265_0_0_0"/>
<dbReference type="OrthoDB" id="9804504at2"/>
<dbReference type="Proteomes" id="UP000002016">
    <property type="component" value="Chromosome"/>
</dbReference>
<dbReference type="GO" id="GO:0005829">
    <property type="term" value="C:cytosol"/>
    <property type="evidence" value="ECO:0007669"/>
    <property type="project" value="TreeGrafter"/>
</dbReference>
<dbReference type="GO" id="GO:0005525">
    <property type="term" value="F:GTP binding"/>
    <property type="evidence" value="ECO:0007669"/>
    <property type="project" value="UniProtKB-UniRule"/>
</dbReference>
<dbReference type="GO" id="GO:0003924">
    <property type="term" value="F:GTPase activity"/>
    <property type="evidence" value="ECO:0007669"/>
    <property type="project" value="InterPro"/>
</dbReference>
<dbReference type="GO" id="GO:0003746">
    <property type="term" value="F:translation elongation factor activity"/>
    <property type="evidence" value="ECO:0007669"/>
    <property type="project" value="UniProtKB-UniRule"/>
</dbReference>
<dbReference type="CDD" id="cd01884">
    <property type="entry name" value="EF_Tu"/>
    <property type="match status" value="1"/>
</dbReference>
<dbReference type="CDD" id="cd03697">
    <property type="entry name" value="EFTU_II"/>
    <property type="match status" value="1"/>
</dbReference>
<dbReference type="CDD" id="cd03707">
    <property type="entry name" value="EFTU_III"/>
    <property type="match status" value="1"/>
</dbReference>
<dbReference type="FunFam" id="2.40.30.10:FF:000001">
    <property type="entry name" value="Elongation factor Tu"/>
    <property type="match status" value="1"/>
</dbReference>
<dbReference type="FunFam" id="3.40.50.300:FF:000003">
    <property type="entry name" value="Elongation factor Tu"/>
    <property type="match status" value="1"/>
</dbReference>
<dbReference type="Gene3D" id="3.40.50.300">
    <property type="entry name" value="P-loop containing nucleotide triphosphate hydrolases"/>
    <property type="match status" value="1"/>
</dbReference>
<dbReference type="Gene3D" id="2.40.30.10">
    <property type="entry name" value="Translation factors"/>
    <property type="match status" value="2"/>
</dbReference>
<dbReference type="HAMAP" id="MF_00118_B">
    <property type="entry name" value="EF_Tu_B"/>
    <property type="match status" value="1"/>
</dbReference>
<dbReference type="InterPro" id="IPR041709">
    <property type="entry name" value="EF-Tu_GTP-bd"/>
</dbReference>
<dbReference type="InterPro" id="IPR050055">
    <property type="entry name" value="EF-Tu_GTPase"/>
</dbReference>
<dbReference type="InterPro" id="IPR004161">
    <property type="entry name" value="EFTu-like_2"/>
</dbReference>
<dbReference type="InterPro" id="IPR033720">
    <property type="entry name" value="EFTU_2"/>
</dbReference>
<dbReference type="InterPro" id="IPR031157">
    <property type="entry name" value="G_TR_CS"/>
</dbReference>
<dbReference type="InterPro" id="IPR027417">
    <property type="entry name" value="P-loop_NTPase"/>
</dbReference>
<dbReference type="InterPro" id="IPR005225">
    <property type="entry name" value="Small_GTP-bd"/>
</dbReference>
<dbReference type="InterPro" id="IPR000795">
    <property type="entry name" value="T_Tr_GTP-bd_dom"/>
</dbReference>
<dbReference type="InterPro" id="IPR009000">
    <property type="entry name" value="Transl_B-barrel_sf"/>
</dbReference>
<dbReference type="InterPro" id="IPR009001">
    <property type="entry name" value="Transl_elong_EF1A/Init_IF2_C"/>
</dbReference>
<dbReference type="InterPro" id="IPR004541">
    <property type="entry name" value="Transl_elong_EFTu/EF1A_bac/org"/>
</dbReference>
<dbReference type="InterPro" id="IPR004160">
    <property type="entry name" value="Transl_elong_EFTu/EF1A_C"/>
</dbReference>
<dbReference type="NCBIfam" id="TIGR00485">
    <property type="entry name" value="EF-Tu"/>
    <property type="match status" value="1"/>
</dbReference>
<dbReference type="NCBIfam" id="NF000766">
    <property type="entry name" value="PRK00049.1"/>
    <property type="match status" value="1"/>
</dbReference>
<dbReference type="NCBIfam" id="NF009372">
    <property type="entry name" value="PRK12735.1"/>
    <property type="match status" value="1"/>
</dbReference>
<dbReference type="NCBIfam" id="NF009373">
    <property type="entry name" value="PRK12736.1"/>
    <property type="match status" value="1"/>
</dbReference>
<dbReference type="NCBIfam" id="TIGR00231">
    <property type="entry name" value="small_GTP"/>
    <property type="match status" value="1"/>
</dbReference>
<dbReference type="PANTHER" id="PTHR43721:SF22">
    <property type="entry name" value="ELONGATION FACTOR TU, MITOCHONDRIAL"/>
    <property type="match status" value="1"/>
</dbReference>
<dbReference type="PANTHER" id="PTHR43721">
    <property type="entry name" value="ELONGATION FACTOR TU-RELATED"/>
    <property type="match status" value="1"/>
</dbReference>
<dbReference type="Pfam" id="PF00009">
    <property type="entry name" value="GTP_EFTU"/>
    <property type="match status" value="1"/>
</dbReference>
<dbReference type="Pfam" id="PF03144">
    <property type="entry name" value="GTP_EFTU_D2"/>
    <property type="match status" value="1"/>
</dbReference>
<dbReference type="Pfam" id="PF03143">
    <property type="entry name" value="GTP_EFTU_D3"/>
    <property type="match status" value="1"/>
</dbReference>
<dbReference type="PRINTS" id="PR00315">
    <property type="entry name" value="ELONGATNFCT"/>
</dbReference>
<dbReference type="SUPFAM" id="SSF50465">
    <property type="entry name" value="EF-Tu/eEF-1alpha/eIF2-gamma C-terminal domain"/>
    <property type="match status" value="1"/>
</dbReference>
<dbReference type="SUPFAM" id="SSF52540">
    <property type="entry name" value="P-loop containing nucleoside triphosphate hydrolases"/>
    <property type="match status" value="1"/>
</dbReference>
<dbReference type="SUPFAM" id="SSF50447">
    <property type="entry name" value="Translation proteins"/>
    <property type="match status" value="1"/>
</dbReference>
<dbReference type="PROSITE" id="PS00301">
    <property type="entry name" value="G_TR_1"/>
    <property type="match status" value="1"/>
</dbReference>
<dbReference type="PROSITE" id="PS51722">
    <property type="entry name" value="G_TR_2"/>
    <property type="match status" value="1"/>
</dbReference>
<reference key="1">
    <citation type="submission" date="2007-08" db="EMBL/GenBank/DDBJ databases">
        <title>Complete sequence of Thermotoga lettingae TMO.</title>
        <authorList>
            <consortium name="US DOE Joint Genome Institute"/>
            <person name="Copeland A."/>
            <person name="Lucas S."/>
            <person name="Lapidus A."/>
            <person name="Barry K."/>
            <person name="Glavina del Rio T."/>
            <person name="Dalin E."/>
            <person name="Tice H."/>
            <person name="Pitluck S."/>
            <person name="Foster B."/>
            <person name="Bruce D."/>
            <person name="Schmutz J."/>
            <person name="Larimer F."/>
            <person name="Land M."/>
            <person name="Hauser L."/>
            <person name="Kyrpides N."/>
            <person name="Mikhailova N."/>
            <person name="Nelson K."/>
            <person name="Gogarten J.P."/>
            <person name="Noll K."/>
            <person name="Richardson P."/>
        </authorList>
    </citation>
    <scope>NUCLEOTIDE SEQUENCE [LARGE SCALE GENOMIC DNA]</scope>
    <source>
        <strain>ATCC BAA-301 / DSM 14385 / NBRC 107922 / TMO</strain>
    </source>
</reference>
<accession>A8F4Q9</accession>
<feature type="chain" id="PRO_1000057792" description="Elongation factor Tu">
    <location>
        <begin position="1"/>
        <end position="399"/>
    </location>
</feature>
<feature type="domain" description="tr-type G">
    <location>
        <begin position="10"/>
        <end position="207"/>
    </location>
</feature>
<feature type="region of interest" description="G1" evidence="1">
    <location>
        <begin position="19"/>
        <end position="26"/>
    </location>
</feature>
<feature type="region of interest" description="G2" evidence="1">
    <location>
        <begin position="60"/>
        <end position="64"/>
    </location>
</feature>
<feature type="region of interest" description="G3" evidence="1">
    <location>
        <begin position="81"/>
        <end position="84"/>
    </location>
</feature>
<feature type="region of interest" description="G4" evidence="1">
    <location>
        <begin position="136"/>
        <end position="139"/>
    </location>
</feature>
<feature type="region of interest" description="G5" evidence="1">
    <location>
        <begin position="174"/>
        <end position="176"/>
    </location>
</feature>
<feature type="binding site" evidence="2">
    <location>
        <begin position="19"/>
        <end position="26"/>
    </location>
    <ligand>
        <name>GTP</name>
        <dbReference type="ChEBI" id="CHEBI:37565"/>
    </ligand>
</feature>
<feature type="binding site" evidence="2">
    <location>
        <position position="26"/>
    </location>
    <ligand>
        <name>Mg(2+)</name>
        <dbReference type="ChEBI" id="CHEBI:18420"/>
    </ligand>
</feature>
<feature type="binding site" evidence="2">
    <location>
        <begin position="81"/>
        <end position="85"/>
    </location>
    <ligand>
        <name>GTP</name>
        <dbReference type="ChEBI" id="CHEBI:37565"/>
    </ligand>
</feature>
<feature type="binding site" evidence="2">
    <location>
        <begin position="136"/>
        <end position="139"/>
    </location>
    <ligand>
        <name>GTP</name>
        <dbReference type="ChEBI" id="CHEBI:37565"/>
    </ligand>
</feature>
<proteinExistence type="inferred from homology"/>
<evidence type="ECO:0000250" key="1"/>
<evidence type="ECO:0000255" key="2">
    <source>
        <dbReference type="HAMAP-Rule" id="MF_00118"/>
    </source>
</evidence>
<name>EFTU_PSELT</name>
<gene>
    <name evidence="2" type="primary">tuf</name>
    <name type="ordered locus">Tlet_0577</name>
</gene>
<protein>
    <recommendedName>
        <fullName evidence="2">Elongation factor Tu</fullName>
        <shortName evidence="2">EF-Tu</shortName>
        <ecNumber evidence="2">3.6.5.3</ecNumber>
    </recommendedName>
</protein>
<organism>
    <name type="scientific">Pseudothermotoga lettingae (strain ATCC BAA-301 / DSM 14385 / NBRC 107922 / TMO)</name>
    <name type="common">Thermotoga lettingae</name>
    <dbReference type="NCBI Taxonomy" id="416591"/>
    <lineage>
        <taxon>Bacteria</taxon>
        <taxon>Thermotogati</taxon>
        <taxon>Thermotogota</taxon>
        <taxon>Thermotogae</taxon>
        <taxon>Thermotogales</taxon>
        <taxon>Thermotogaceae</taxon>
        <taxon>Pseudothermotoga</taxon>
    </lineage>
</organism>
<comment type="function">
    <text evidence="2">GTP hydrolase that promotes the GTP-dependent binding of aminoacyl-tRNA to the A-site of ribosomes during protein biosynthesis.</text>
</comment>
<comment type="catalytic activity">
    <reaction evidence="2">
        <text>GTP + H2O = GDP + phosphate + H(+)</text>
        <dbReference type="Rhea" id="RHEA:19669"/>
        <dbReference type="ChEBI" id="CHEBI:15377"/>
        <dbReference type="ChEBI" id="CHEBI:15378"/>
        <dbReference type="ChEBI" id="CHEBI:37565"/>
        <dbReference type="ChEBI" id="CHEBI:43474"/>
        <dbReference type="ChEBI" id="CHEBI:58189"/>
        <dbReference type="EC" id="3.6.5.3"/>
    </reaction>
    <physiologicalReaction direction="left-to-right" evidence="2">
        <dbReference type="Rhea" id="RHEA:19670"/>
    </physiologicalReaction>
</comment>
<comment type="subunit">
    <text evidence="2">Monomer.</text>
</comment>
<comment type="subcellular location">
    <subcellularLocation>
        <location evidence="2">Cytoplasm</location>
    </subcellularLocation>
</comment>
<comment type="similarity">
    <text evidence="2">Belongs to the TRAFAC class translation factor GTPase superfamily. Classic translation factor GTPase family. EF-Tu/EF-1A subfamily.</text>
</comment>
<keyword id="KW-0963">Cytoplasm</keyword>
<keyword id="KW-0251">Elongation factor</keyword>
<keyword id="KW-0342">GTP-binding</keyword>
<keyword id="KW-0378">Hydrolase</keyword>
<keyword id="KW-0460">Magnesium</keyword>
<keyword id="KW-0479">Metal-binding</keyword>
<keyword id="KW-0547">Nucleotide-binding</keyword>
<keyword id="KW-0648">Protein biosynthesis</keyword>
<keyword id="KW-1185">Reference proteome</keyword>
<sequence length="399" mass="43916">MAKEKFVRTKPHVNVGTIGHIDHGKTTLTAAITKYLSYKGFASFVPFEQIDKAPEEKARGITINITHVEYQSEKRHYAHIDCPGHADYIKNMITGAAQMDGAILVVAATDGPMPQTREHVLLARQVNVPAMVVFLNKVDAVDDQELVDLVEMEVRDLLTKYEFPGDEIPVIRGSALLALEANDPNDAAYKPIQELIDALDSYIPEPVREVDKPFLMAVEDVFSITGRGTVATGRIERGKIRPGDEVEIVGLSYETRKTVVTSVEMFRKELDEGLAGDNVGCLLRGIDKDEIERGQVLAAPGSITPHTTFKANVYVLKKEEGGRHTPFMKGYRPQFFIRTADVTGEITELGNNAEMVMPGDNAILTIKLIYPVAIEKGMRFAIREGGRTVGAGVVAEIVE</sequence>